<accession>Q02LE0</accession>
<name>Y3873_PSEAB</name>
<organism>
    <name type="scientific">Pseudomonas aeruginosa (strain UCBPP-PA14)</name>
    <dbReference type="NCBI Taxonomy" id="208963"/>
    <lineage>
        <taxon>Bacteria</taxon>
        <taxon>Pseudomonadati</taxon>
        <taxon>Pseudomonadota</taxon>
        <taxon>Gammaproteobacteria</taxon>
        <taxon>Pseudomonadales</taxon>
        <taxon>Pseudomonadaceae</taxon>
        <taxon>Pseudomonas</taxon>
    </lineage>
</organism>
<keyword id="KW-0997">Cell inner membrane</keyword>
<keyword id="KW-1003">Cell membrane</keyword>
<keyword id="KW-0472">Membrane</keyword>
<keyword id="KW-0812">Transmembrane</keyword>
<keyword id="KW-1133">Transmembrane helix</keyword>
<keyword id="KW-0813">Transport</keyword>
<dbReference type="EMBL" id="CP000438">
    <property type="protein sequence ID" value="ABJ11180.1"/>
    <property type="molecule type" value="Genomic_DNA"/>
</dbReference>
<dbReference type="RefSeq" id="WP_003139740.1">
    <property type="nucleotide sequence ID" value="NZ_CP034244.1"/>
</dbReference>
<dbReference type="SMR" id="Q02LE0"/>
<dbReference type="KEGG" id="pau:PA14_38730"/>
<dbReference type="PseudoCAP" id="PA14_38730"/>
<dbReference type="HOGENOM" id="CLU_001265_10_3_6"/>
<dbReference type="BioCyc" id="PAER208963:G1G74-3255-MONOMER"/>
<dbReference type="Proteomes" id="UP000000653">
    <property type="component" value="Chromosome"/>
</dbReference>
<dbReference type="GO" id="GO:0005886">
    <property type="term" value="C:plasma membrane"/>
    <property type="evidence" value="ECO:0007669"/>
    <property type="project" value="UniProtKB-SubCell"/>
</dbReference>
<dbReference type="GO" id="GO:0022857">
    <property type="term" value="F:transmembrane transporter activity"/>
    <property type="evidence" value="ECO:0007669"/>
    <property type="project" value="UniProtKB-UniRule"/>
</dbReference>
<dbReference type="CDD" id="cd17489">
    <property type="entry name" value="MFS_YfcJ_like"/>
    <property type="match status" value="1"/>
</dbReference>
<dbReference type="Gene3D" id="1.20.1250.20">
    <property type="entry name" value="MFS general substrate transporter like domains"/>
    <property type="match status" value="1"/>
</dbReference>
<dbReference type="HAMAP" id="MF_01118">
    <property type="entry name" value="MFS_YhhS"/>
    <property type="match status" value="1"/>
</dbReference>
<dbReference type="InterPro" id="IPR011701">
    <property type="entry name" value="MFS"/>
</dbReference>
<dbReference type="InterPro" id="IPR020846">
    <property type="entry name" value="MFS_dom"/>
</dbReference>
<dbReference type="InterPro" id="IPR036259">
    <property type="entry name" value="MFS_trans_sf"/>
</dbReference>
<dbReference type="InterPro" id="IPR050171">
    <property type="entry name" value="MFS_Transporters"/>
</dbReference>
<dbReference type="InterPro" id="IPR023008">
    <property type="entry name" value="MFS_YhhS-like"/>
</dbReference>
<dbReference type="NCBIfam" id="NF003477">
    <property type="entry name" value="PRK05122.1"/>
    <property type="match status" value="1"/>
</dbReference>
<dbReference type="NCBIfam" id="NF009048">
    <property type="entry name" value="PRK12382.1"/>
    <property type="match status" value="1"/>
</dbReference>
<dbReference type="PANTHER" id="PTHR23517:SF13">
    <property type="entry name" value="MAJOR FACILITATOR SUPERFAMILY MFS_1"/>
    <property type="match status" value="1"/>
</dbReference>
<dbReference type="PANTHER" id="PTHR23517">
    <property type="entry name" value="RESISTANCE PROTEIN MDTM, PUTATIVE-RELATED-RELATED"/>
    <property type="match status" value="1"/>
</dbReference>
<dbReference type="Pfam" id="PF07690">
    <property type="entry name" value="MFS_1"/>
    <property type="match status" value="1"/>
</dbReference>
<dbReference type="SUPFAM" id="SSF103473">
    <property type="entry name" value="MFS general substrate transporter"/>
    <property type="match status" value="1"/>
</dbReference>
<dbReference type="PROSITE" id="PS50850">
    <property type="entry name" value="MFS"/>
    <property type="match status" value="1"/>
</dbReference>
<comment type="subcellular location">
    <subcellularLocation>
        <location evidence="1">Cell inner membrane</location>
        <topology evidence="1">Multi-pass membrane protein</topology>
    </subcellularLocation>
</comment>
<comment type="similarity">
    <text evidence="1">Belongs to the major facilitator superfamily. YhhS family.</text>
</comment>
<evidence type="ECO:0000255" key="1">
    <source>
        <dbReference type="HAMAP-Rule" id="MF_01118"/>
    </source>
</evidence>
<feature type="chain" id="PRO_1000065249" description="Uncharacterized MFS-type transporter PA14_38730">
    <location>
        <begin position="1"/>
        <end position="402"/>
    </location>
</feature>
<feature type="transmembrane region" description="Helical" evidence="1">
    <location>
        <begin position="23"/>
        <end position="43"/>
    </location>
</feature>
<feature type="transmembrane region" description="Helical" evidence="1">
    <location>
        <begin position="52"/>
        <end position="72"/>
    </location>
</feature>
<feature type="transmembrane region" description="Helical" evidence="1">
    <location>
        <begin position="90"/>
        <end position="110"/>
    </location>
</feature>
<feature type="transmembrane region" description="Helical" evidence="1">
    <location>
        <begin position="121"/>
        <end position="141"/>
    </location>
</feature>
<feature type="transmembrane region" description="Helical" evidence="1">
    <location>
        <begin position="158"/>
        <end position="178"/>
    </location>
</feature>
<feature type="transmembrane region" description="Helical" evidence="1">
    <location>
        <begin position="180"/>
        <end position="200"/>
    </location>
</feature>
<feature type="transmembrane region" description="Helical" evidence="1">
    <location>
        <begin position="228"/>
        <end position="248"/>
    </location>
</feature>
<feature type="transmembrane region" description="Helical" evidence="1">
    <location>
        <begin position="255"/>
        <end position="275"/>
    </location>
</feature>
<feature type="transmembrane region" description="Helical" evidence="1">
    <location>
        <begin position="282"/>
        <end position="302"/>
    </location>
</feature>
<feature type="transmembrane region" description="Helical" evidence="1">
    <location>
        <begin position="309"/>
        <end position="329"/>
    </location>
</feature>
<feature type="transmembrane region" description="Helical" evidence="1">
    <location>
        <begin position="351"/>
        <end position="371"/>
    </location>
</feature>
<feature type="transmembrane region" description="Helical" evidence="1">
    <location>
        <begin position="375"/>
        <end position="395"/>
    </location>
</feature>
<protein>
    <recommendedName>
        <fullName evidence="1">Uncharacterized MFS-type transporter PA14_38730</fullName>
    </recommendedName>
</protein>
<proteinExistence type="inferred from homology"/>
<reference key="1">
    <citation type="journal article" date="2006" name="Genome Biol.">
        <title>Genomic analysis reveals that Pseudomonas aeruginosa virulence is combinatorial.</title>
        <authorList>
            <person name="Lee D.G."/>
            <person name="Urbach J.M."/>
            <person name="Wu G."/>
            <person name="Liberati N.T."/>
            <person name="Feinbaum R.L."/>
            <person name="Miyata S."/>
            <person name="Diggins L.T."/>
            <person name="He J."/>
            <person name="Saucier M."/>
            <person name="Deziel E."/>
            <person name="Friedman L."/>
            <person name="Li L."/>
            <person name="Grills G."/>
            <person name="Montgomery K."/>
            <person name="Kucherlapati R."/>
            <person name="Rahme L.G."/>
            <person name="Ausubel F.M."/>
        </authorList>
    </citation>
    <scope>NUCLEOTIDE SEQUENCE [LARGE SCALE GENOMIC DNA]</scope>
    <source>
        <strain>UCBPP-PA14</strain>
    </source>
</reference>
<sequence length="402" mass="41499">MSVDIRPTPPAQDSARQNVTLQIVSVVMFTFIGYLTIGIPLAVLPGYVHDDLGYGSVLAGLVISLQYLATLLARPYAGRVIDGLGPKRAVLYGMAGSAASGLFMLLSVAIQGWPALSLASLLVGRLVLGAAESLVGSAAIGWGIGRVGAPHTAKVISWNGIASYGAIALGAPLGVLLVQWLGLWSMGASIVLLGALGFALAWPKLPAPLVHGERLPFHHVLGRVTPHGMGLALGAIGFGTIATFITLYYASRGWANAVLCLSAFGGCFIGARLLFANSINRLGGFRVAIICLGVESLGLLLLWSAPNPWVGLAGAALTGFGFSLVFPAFGVEAVNLVPASNRGAALGAYSLFVDLSLGITGPLVGFVANLFGFRSMFLFACLASLSGLALAIALHRRSRRPG</sequence>
<gene>
    <name type="ordered locus">PA14_38730</name>
</gene>